<evidence type="ECO:0000250" key="1">
    <source>
        <dbReference type="UniProtKB" id="Q2FXT0"/>
    </source>
</evidence>
<evidence type="ECO:0000255" key="2">
    <source>
        <dbReference type="HAMAP-Rule" id="MF_00539"/>
    </source>
</evidence>
<evidence type="ECO:0000305" key="3"/>
<reference key="1">
    <citation type="submission" date="2008-10" db="EMBL/GenBank/DDBJ databases">
        <title>Genome sequence of Clostridium botulinum A2 Kyoto.</title>
        <authorList>
            <person name="Shrivastava S."/>
            <person name="Brinkac L.M."/>
            <person name="Brown J.L."/>
            <person name="Bruce D."/>
            <person name="Detter C.C."/>
            <person name="Johnson E.A."/>
            <person name="Munk C.A."/>
            <person name="Smith L.A."/>
            <person name="Smith T.J."/>
            <person name="Sutton G."/>
            <person name="Brettin T.S."/>
        </authorList>
    </citation>
    <scope>NUCLEOTIDE SEQUENCE [LARGE SCALE GENOMIC DNA]</scope>
    <source>
        <strain>Kyoto / Type A2</strain>
    </source>
</reference>
<gene>
    <name evidence="2" type="primary">rpmA</name>
    <name type="ordered locus">CLM_3382</name>
</gene>
<proteinExistence type="inferred from homology"/>
<protein>
    <recommendedName>
        <fullName evidence="2">Large ribosomal subunit protein bL27</fullName>
    </recommendedName>
    <alternativeName>
        <fullName evidence="3">50S ribosomal protein L27</fullName>
    </alternativeName>
</protein>
<dbReference type="EMBL" id="CP001581">
    <property type="protein sequence ID" value="ACO85166.1"/>
    <property type="molecule type" value="Genomic_DNA"/>
</dbReference>
<dbReference type="RefSeq" id="WP_003357774.1">
    <property type="nucleotide sequence ID" value="NC_012563.1"/>
</dbReference>
<dbReference type="SMR" id="C1FVW6"/>
<dbReference type="GeneID" id="92939708"/>
<dbReference type="KEGG" id="cby:CLM_3382"/>
<dbReference type="eggNOG" id="COG0211">
    <property type="taxonomic scope" value="Bacteria"/>
</dbReference>
<dbReference type="HOGENOM" id="CLU_095424_4_0_9"/>
<dbReference type="Proteomes" id="UP000001374">
    <property type="component" value="Chromosome"/>
</dbReference>
<dbReference type="GO" id="GO:0022625">
    <property type="term" value="C:cytosolic large ribosomal subunit"/>
    <property type="evidence" value="ECO:0007669"/>
    <property type="project" value="TreeGrafter"/>
</dbReference>
<dbReference type="GO" id="GO:0003735">
    <property type="term" value="F:structural constituent of ribosome"/>
    <property type="evidence" value="ECO:0007669"/>
    <property type="project" value="InterPro"/>
</dbReference>
<dbReference type="GO" id="GO:0006412">
    <property type="term" value="P:translation"/>
    <property type="evidence" value="ECO:0007669"/>
    <property type="project" value="UniProtKB-UniRule"/>
</dbReference>
<dbReference type="FunFam" id="2.40.50.100:FF:000004">
    <property type="entry name" value="50S ribosomal protein L27"/>
    <property type="match status" value="1"/>
</dbReference>
<dbReference type="Gene3D" id="2.40.50.100">
    <property type="match status" value="1"/>
</dbReference>
<dbReference type="HAMAP" id="MF_00539">
    <property type="entry name" value="Ribosomal_bL27"/>
    <property type="match status" value="1"/>
</dbReference>
<dbReference type="InterPro" id="IPR001684">
    <property type="entry name" value="Ribosomal_bL27"/>
</dbReference>
<dbReference type="InterPro" id="IPR018261">
    <property type="entry name" value="Ribosomal_bL27_CS"/>
</dbReference>
<dbReference type="NCBIfam" id="TIGR00062">
    <property type="entry name" value="L27"/>
    <property type="match status" value="1"/>
</dbReference>
<dbReference type="PANTHER" id="PTHR15893:SF0">
    <property type="entry name" value="LARGE RIBOSOMAL SUBUNIT PROTEIN BL27M"/>
    <property type="match status" value="1"/>
</dbReference>
<dbReference type="PANTHER" id="PTHR15893">
    <property type="entry name" value="RIBOSOMAL PROTEIN L27"/>
    <property type="match status" value="1"/>
</dbReference>
<dbReference type="Pfam" id="PF01016">
    <property type="entry name" value="Ribosomal_L27"/>
    <property type="match status" value="1"/>
</dbReference>
<dbReference type="PRINTS" id="PR00063">
    <property type="entry name" value="RIBOSOMALL27"/>
</dbReference>
<dbReference type="SUPFAM" id="SSF110324">
    <property type="entry name" value="Ribosomal L27 protein-like"/>
    <property type="match status" value="1"/>
</dbReference>
<dbReference type="PROSITE" id="PS00831">
    <property type="entry name" value="RIBOSOMAL_L27"/>
    <property type="match status" value="1"/>
</dbReference>
<keyword id="KW-0687">Ribonucleoprotein</keyword>
<keyword id="KW-0689">Ribosomal protein</keyword>
<organism>
    <name type="scientific">Clostridium botulinum (strain Kyoto / Type A2)</name>
    <dbReference type="NCBI Taxonomy" id="536232"/>
    <lineage>
        <taxon>Bacteria</taxon>
        <taxon>Bacillati</taxon>
        <taxon>Bacillota</taxon>
        <taxon>Clostridia</taxon>
        <taxon>Eubacteriales</taxon>
        <taxon>Clostridiaceae</taxon>
        <taxon>Clostridium</taxon>
    </lineage>
</organism>
<sequence>MLVMNLQLFAHKKGVGSSKNGRDSEAKRLGVKCSDGQFVLAGNILVRQRGTKIHPGLNVGRGGDDTLFAKIDGVVKYERLGRDKKKASVYPVEVEEVVAE</sequence>
<name>RL27_CLOBJ</name>
<feature type="propeptide" id="PRO_0000459876" evidence="1">
    <location>
        <begin position="1"/>
        <end position="9"/>
    </location>
</feature>
<feature type="chain" id="PRO_1000146520" description="Large ribosomal subunit protein bL27">
    <location>
        <begin position="10"/>
        <end position="100"/>
    </location>
</feature>
<comment type="PTM">
    <text evidence="1">The N-terminus is cleaved by ribosomal processing cysteine protease Prp.</text>
</comment>
<comment type="similarity">
    <text evidence="2">Belongs to the bacterial ribosomal protein bL27 family.</text>
</comment>
<accession>C1FVW6</accession>